<keyword id="KW-1185">Reference proteome</keyword>
<proteinExistence type="inferred from homology"/>
<gene>
    <name evidence="1" type="primary">cinA</name>
    <name type="ordered locus">Daud_0842</name>
</gene>
<evidence type="ECO:0000255" key="1">
    <source>
        <dbReference type="HAMAP-Rule" id="MF_00226"/>
    </source>
</evidence>
<feature type="chain" id="PRO_1000100314" description="Putative competence-damage inducible protein">
    <location>
        <begin position="1"/>
        <end position="413"/>
    </location>
</feature>
<sequence>MQAEIICTGSELLLGYVQNTNADYLGHELAALGIEVVLQITVGDDWKIMEQAVREALERVDLVITTGGLGPTTDDITKDVIAAVLGVPMVTDDESLAQMREYFARRGIEMPDIFIRQASFPYGSRIIPNHKGTAPGALIERDGKVIVIFPGPPRELRAMFETWVKPYLLEIPGRGEVLRTRVLKLTGIAEYAVQEILKELGDLVNPSLGYLAMPGEVHLRVNAHAVDPAEAERMVEELTEKVTGLVGEYVFAIDDEVPEKTVGDLLLRKGLTVSVAESCTAGMVAARFTDVPGSSRYFIGGVVAYDNDLKREVLGVPAEILDRYGAVSEQTAVAMAEGIRRLTGSDLGLAITGIAGPDGGTRAKPVGLVYVALASARETLCQRLLLPGVRKAVRIGTVNSSLRIVKSFLNRQA</sequence>
<protein>
    <recommendedName>
        <fullName evidence="1">Putative competence-damage inducible protein</fullName>
    </recommendedName>
</protein>
<organism>
    <name type="scientific">Desulforudis audaxviator (strain MP104C)</name>
    <dbReference type="NCBI Taxonomy" id="477974"/>
    <lineage>
        <taxon>Bacteria</taxon>
        <taxon>Bacillati</taxon>
        <taxon>Bacillota</taxon>
        <taxon>Clostridia</taxon>
        <taxon>Thermoanaerobacterales</taxon>
        <taxon>Candidatus Desulforudaceae</taxon>
        <taxon>Candidatus Desulforudis</taxon>
    </lineage>
</organism>
<reference key="1">
    <citation type="submission" date="2007-10" db="EMBL/GenBank/DDBJ databases">
        <title>Complete sequence of chromosome of Desulforudis audaxviator MP104C.</title>
        <authorList>
            <person name="Copeland A."/>
            <person name="Lucas S."/>
            <person name="Lapidus A."/>
            <person name="Barry K."/>
            <person name="Glavina del Rio T."/>
            <person name="Dalin E."/>
            <person name="Tice H."/>
            <person name="Bruce D."/>
            <person name="Pitluck S."/>
            <person name="Lowry S.R."/>
            <person name="Larimer F."/>
            <person name="Land M.L."/>
            <person name="Hauser L."/>
            <person name="Kyrpides N."/>
            <person name="Ivanova N.N."/>
            <person name="Richardson P."/>
        </authorList>
    </citation>
    <scope>NUCLEOTIDE SEQUENCE [LARGE SCALE GENOMIC DNA]</scope>
    <source>
        <strain>MP104C</strain>
    </source>
</reference>
<comment type="similarity">
    <text evidence="1">Belongs to the CinA family.</text>
</comment>
<dbReference type="EMBL" id="CP000860">
    <property type="protein sequence ID" value="ACA59356.1"/>
    <property type="molecule type" value="Genomic_DNA"/>
</dbReference>
<dbReference type="RefSeq" id="WP_012301942.1">
    <property type="nucleotide sequence ID" value="NC_010424.1"/>
</dbReference>
<dbReference type="SMR" id="B1I313"/>
<dbReference type="STRING" id="477974.Daud_0842"/>
<dbReference type="KEGG" id="dau:Daud_0842"/>
<dbReference type="eggNOG" id="COG1058">
    <property type="taxonomic scope" value="Bacteria"/>
</dbReference>
<dbReference type="eggNOG" id="COG1546">
    <property type="taxonomic scope" value="Bacteria"/>
</dbReference>
<dbReference type="HOGENOM" id="CLU_030805_9_3_9"/>
<dbReference type="OrthoDB" id="9801454at2"/>
<dbReference type="Proteomes" id="UP000008544">
    <property type="component" value="Chromosome"/>
</dbReference>
<dbReference type="CDD" id="cd00885">
    <property type="entry name" value="cinA"/>
    <property type="match status" value="1"/>
</dbReference>
<dbReference type="Gene3D" id="3.30.70.2860">
    <property type="match status" value="1"/>
</dbReference>
<dbReference type="Gene3D" id="3.90.950.20">
    <property type="entry name" value="CinA-like"/>
    <property type="match status" value="1"/>
</dbReference>
<dbReference type="Gene3D" id="3.40.980.10">
    <property type="entry name" value="MoaB/Mog-like domain"/>
    <property type="match status" value="1"/>
</dbReference>
<dbReference type="HAMAP" id="MF_00226_B">
    <property type="entry name" value="CinA_B"/>
    <property type="match status" value="1"/>
</dbReference>
<dbReference type="InterPro" id="IPR050101">
    <property type="entry name" value="CinA"/>
</dbReference>
<dbReference type="InterPro" id="IPR036653">
    <property type="entry name" value="CinA-like_C"/>
</dbReference>
<dbReference type="InterPro" id="IPR008136">
    <property type="entry name" value="CinA_C"/>
</dbReference>
<dbReference type="InterPro" id="IPR041424">
    <property type="entry name" value="CinA_KH"/>
</dbReference>
<dbReference type="InterPro" id="IPR008135">
    <property type="entry name" value="Competence-induced_CinA"/>
</dbReference>
<dbReference type="InterPro" id="IPR036425">
    <property type="entry name" value="MoaB/Mog-like_dom_sf"/>
</dbReference>
<dbReference type="InterPro" id="IPR001453">
    <property type="entry name" value="MoaB/Mog_dom"/>
</dbReference>
<dbReference type="NCBIfam" id="TIGR00200">
    <property type="entry name" value="cinA_nterm"/>
    <property type="match status" value="1"/>
</dbReference>
<dbReference type="NCBIfam" id="TIGR00177">
    <property type="entry name" value="molyb_syn"/>
    <property type="match status" value="1"/>
</dbReference>
<dbReference type="NCBIfam" id="TIGR00199">
    <property type="entry name" value="PncC_domain"/>
    <property type="match status" value="1"/>
</dbReference>
<dbReference type="NCBIfam" id="NF001813">
    <property type="entry name" value="PRK00549.1"/>
    <property type="match status" value="1"/>
</dbReference>
<dbReference type="PANTHER" id="PTHR13939">
    <property type="entry name" value="NICOTINAMIDE-NUCLEOTIDE AMIDOHYDROLASE PNCC"/>
    <property type="match status" value="1"/>
</dbReference>
<dbReference type="PANTHER" id="PTHR13939:SF0">
    <property type="entry name" value="NMN AMIDOHYDROLASE-LIKE PROTEIN YFAY"/>
    <property type="match status" value="1"/>
</dbReference>
<dbReference type="Pfam" id="PF02464">
    <property type="entry name" value="CinA"/>
    <property type="match status" value="1"/>
</dbReference>
<dbReference type="Pfam" id="PF18146">
    <property type="entry name" value="CinA_KH"/>
    <property type="match status" value="1"/>
</dbReference>
<dbReference type="Pfam" id="PF00994">
    <property type="entry name" value="MoCF_biosynth"/>
    <property type="match status" value="1"/>
</dbReference>
<dbReference type="PIRSF" id="PIRSF006728">
    <property type="entry name" value="CinA"/>
    <property type="match status" value="1"/>
</dbReference>
<dbReference type="SMART" id="SM00852">
    <property type="entry name" value="MoCF_biosynth"/>
    <property type="match status" value="1"/>
</dbReference>
<dbReference type="SUPFAM" id="SSF142433">
    <property type="entry name" value="CinA-like"/>
    <property type="match status" value="1"/>
</dbReference>
<dbReference type="SUPFAM" id="SSF53218">
    <property type="entry name" value="Molybdenum cofactor biosynthesis proteins"/>
    <property type="match status" value="1"/>
</dbReference>
<accession>B1I313</accession>
<name>CINA_DESAP</name>